<name>YHEU_ECOBW</name>
<proteinExistence type="inferred from homology"/>
<evidence type="ECO:0000255" key="1">
    <source>
        <dbReference type="HAMAP-Rule" id="MF_00690"/>
    </source>
</evidence>
<sequence>MLIPWQDLSPETLENLIESFVLREGTDYGEHERTLEQKVADVKRQLQCGEAVLVWSELHETVNIMPRSQFRE</sequence>
<gene>
    <name evidence="1" type="primary">yheU</name>
    <name type="ordered locus">BWG_3046</name>
</gene>
<protein>
    <recommendedName>
        <fullName evidence="1">UPF0270 protein YheU</fullName>
    </recommendedName>
</protein>
<accession>C4ZUL0</accession>
<feature type="chain" id="PRO_1000212579" description="UPF0270 protein YheU">
    <location>
        <begin position="1"/>
        <end position="72"/>
    </location>
</feature>
<organism>
    <name type="scientific">Escherichia coli (strain K12 / MC4100 / BW2952)</name>
    <dbReference type="NCBI Taxonomy" id="595496"/>
    <lineage>
        <taxon>Bacteria</taxon>
        <taxon>Pseudomonadati</taxon>
        <taxon>Pseudomonadota</taxon>
        <taxon>Gammaproteobacteria</taxon>
        <taxon>Enterobacterales</taxon>
        <taxon>Enterobacteriaceae</taxon>
        <taxon>Escherichia</taxon>
    </lineage>
</organism>
<dbReference type="EMBL" id="CP001396">
    <property type="protein sequence ID" value="ACR62538.1"/>
    <property type="molecule type" value="Genomic_DNA"/>
</dbReference>
<dbReference type="RefSeq" id="WP_000907085.1">
    <property type="nucleotide sequence ID" value="NC_012759.1"/>
</dbReference>
<dbReference type="SMR" id="C4ZUL0"/>
<dbReference type="KEGG" id="ebw:BWG_3046"/>
<dbReference type="HOGENOM" id="CLU_186759_1_0_6"/>
<dbReference type="Gene3D" id="1.10.10.610">
    <property type="entry name" value="YehU-like"/>
    <property type="match status" value="1"/>
</dbReference>
<dbReference type="HAMAP" id="MF_00690">
    <property type="entry name" value="UPF0270"/>
    <property type="match status" value="1"/>
</dbReference>
<dbReference type="InterPro" id="IPR010648">
    <property type="entry name" value="UPF0270"/>
</dbReference>
<dbReference type="InterPro" id="IPR036685">
    <property type="entry name" value="YehU-like_sf"/>
</dbReference>
<dbReference type="NCBIfam" id="NF003438">
    <property type="entry name" value="PRK04966.1"/>
    <property type="match status" value="1"/>
</dbReference>
<dbReference type="Pfam" id="PF06794">
    <property type="entry name" value="UPF0270"/>
    <property type="match status" value="1"/>
</dbReference>
<dbReference type="PIRSF" id="PIRSF006169">
    <property type="entry name" value="UCP006169"/>
    <property type="match status" value="1"/>
</dbReference>
<dbReference type="SUPFAM" id="SSF118001">
    <property type="entry name" value="YehU-like"/>
    <property type="match status" value="1"/>
</dbReference>
<comment type="similarity">
    <text evidence="1">Belongs to the UPF0270 family.</text>
</comment>
<reference key="1">
    <citation type="journal article" date="2009" name="J. Bacteriol.">
        <title>Genomic sequencing reveals regulatory mutations and recombinational events in the widely used MC4100 lineage of Escherichia coli K-12.</title>
        <authorList>
            <person name="Ferenci T."/>
            <person name="Zhou Z."/>
            <person name="Betteridge T."/>
            <person name="Ren Y."/>
            <person name="Liu Y."/>
            <person name="Feng L."/>
            <person name="Reeves P.R."/>
            <person name="Wang L."/>
        </authorList>
    </citation>
    <scope>NUCLEOTIDE SEQUENCE [LARGE SCALE GENOMIC DNA]</scope>
    <source>
        <strain>K12 / MC4100 / BW2952</strain>
    </source>
</reference>